<organism>
    <name type="scientific">Ovis aries</name>
    <name type="common">Sheep</name>
    <dbReference type="NCBI Taxonomy" id="9940"/>
    <lineage>
        <taxon>Eukaryota</taxon>
        <taxon>Metazoa</taxon>
        <taxon>Chordata</taxon>
        <taxon>Craniata</taxon>
        <taxon>Vertebrata</taxon>
        <taxon>Euteleostomi</taxon>
        <taxon>Mammalia</taxon>
        <taxon>Eutheria</taxon>
        <taxon>Laurasiatheria</taxon>
        <taxon>Artiodactyla</taxon>
        <taxon>Ruminantia</taxon>
        <taxon>Pecora</taxon>
        <taxon>Bovidae</taxon>
        <taxon>Caprinae</taxon>
        <taxon>Ovis</taxon>
    </lineage>
</organism>
<dbReference type="EMBL" id="AJ006277">
    <property type="protein sequence ID" value="CAA06944.1"/>
    <property type="molecule type" value="Genomic_DNA"/>
</dbReference>
<dbReference type="SMR" id="O77727"/>
<dbReference type="PaxDb" id="9940-ENSOARP00000018244"/>
<dbReference type="PRIDE" id="O77727"/>
<dbReference type="eggNOG" id="ENOG502QTM6">
    <property type="taxonomic scope" value="Eukaryota"/>
</dbReference>
<dbReference type="Proteomes" id="UP000002356">
    <property type="component" value="Unplaced"/>
</dbReference>
<dbReference type="GO" id="GO:0005882">
    <property type="term" value="C:intermediate filament"/>
    <property type="evidence" value="ECO:0007669"/>
    <property type="project" value="UniProtKB-KW"/>
</dbReference>
<dbReference type="GO" id="GO:0005198">
    <property type="term" value="F:structural molecule activity"/>
    <property type="evidence" value="ECO:0007669"/>
    <property type="project" value="InterPro"/>
</dbReference>
<dbReference type="GO" id="GO:0030855">
    <property type="term" value="P:epithelial cell differentiation"/>
    <property type="evidence" value="ECO:0007669"/>
    <property type="project" value="TreeGrafter"/>
</dbReference>
<dbReference type="GO" id="GO:0045109">
    <property type="term" value="P:intermediate filament organization"/>
    <property type="evidence" value="ECO:0007669"/>
    <property type="project" value="TreeGrafter"/>
</dbReference>
<dbReference type="FunFam" id="1.20.5.1160:FF:000002">
    <property type="entry name" value="Type I keratin 10"/>
    <property type="match status" value="1"/>
</dbReference>
<dbReference type="FunFam" id="1.20.5.170:FF:000002">
    <property type="entry name" value="Type I keratin KA11"/>
    <property type="match status" value="1"/>
</dbReference>
<dbReference type="FunFam" id="1.20.5.500:FF:000001">
    <property type="entry name" value="Type II keratin 23"/>
    <property type="match status" value="1"/>
</dbReference>
<dbReference type="Gene3D" id="1.20.5.170">
    <property type="match status" value="1"/>
</dbReference>
<dbReference type="Gene3D" id="1.20.5.500">
    <property type="entry name" value="Single helix bin"/>
    <property type="match status" value="1"/>
</dbReference>
<dbReference type="Gene3D" id="1.20.5.1160">
    <property type="entry name" value="Vasodilator-stimulated phosphoprotein"/>
    <property type="match status" value="1"/>
</dbReference>
<dbReference type="InterPro" id="IPR018039">
    <property type="entry name" value="IF_conserved"/>
</dbReference>
<dbReference type="InterPro" id="IPR039008">
    <property type="entry name" value="IF_rod_dom"/>
</dbReference>
<dbReference type="InterPro" id="IPR002957">
    <property type="entry name" value="Keratin_I"/>
</dbReference>
<dbReference type="PANTHER" id="PTHR23239">
    <property type="entry name" value="INTERMEDIATE FILAMENT"/>
    <property type="match status" value="1"/>
</dbReference>
<dbReference type="PANTHER" id="PTHR23239:SF164">
    <property type="entry name" value="KERATIN, TYPE I CYTOSKELETAL 15"/>
    <property type="match status" value="1"/>
</dbReference>
<dbReference type="Pfam" id="PF00038">
    <property type="entry name" value="Filament"/>
    <property type="match status" value="1"/>
</dbReference>
<dbReference type="PRINTS" id="PR01248">
    <property type="entry name" value="TYPE1KERATIN"/>
</dbReference>
<dbReference type="SMART" id="SM01391">
    <property type="entry name" value="Filament"/>
    <property type="match status" value="1"/>
</dbReference>
<dbReference type="SUPFAM" id="SSF64593">
    <property type="entry name" value="Intermediate filament protein, coiled coil region"/>
    <property type="match status" value="2"/>
</dbReference>
<dbReference type="SUPFAM" id="SSF46579">
    <property type="entry name" value="Prefoldin"/>
    <property type="match status" value="1"/>
</dbReference>
<dbReference type="PROSITE" id="PS00226">
    <property type="entry name" value="IF_ROD_1"/>
    <property type="match status" value="1"/>
</dbReference>
<dbReference type="PROSITE" id="PS51842">
    <property type="entry name" value="IF_ROD_2"/>
    <property type="match status" value="1"/>
</dbReference>
<evidence type="ECO:0000250" key="1">
    <source>
        <dbReference type="UniProtKB" id="P19012"/>
    </source>
</evidence>
<evidence type="ECO:0000250" key="2">
    <source>
        <dbReference type="UniProtKB" id="Q04695"/>
    </source>
</evidence>
<evidence type="ECO:0000250" key="3">
    <source>
        <dbReference type="UniProtKB" id="Q61414"/>
    </source>
</evidence>
<evidence type="ECO:0000250" key="4">
    <source>
        <dbReference type="UniProtKB" id="Q6IFV3"/>
    </source>
</evidence>
<evidence type="ECO:0000255" key="5"/>
<evidence type="ECO:0000255" key="6">
    <source>
        <dbReference type="PROSITE-ProRule" id="PRU01188"/>
    </source>
</evidence>
<evidence type="ECO:0000269" key="7">
    <source>
    </source>
</evidence>
<evidence type="ECO:0000305" key="8"/>
<evidence type="ECO:0000312" key="9">
    <source>
        <dbReference type="EMBL" id="CAA06944.1"/>
    </source>
</evidence>
<sequence length="453" mass="48770">MATTLLQTSSSTFGGSSTRGGSLLAGGGGFGGGSLYGGGGSRTISASSARFVSSGSAGGYGGGFGGGAGSGYGGGFGGGFGGGFGSGFGDFGGGDGGLLSGNEKITMQNLNDRLASYLEKVRALEEANADLEVKIRDWYQRQSPTSPERDYSPYFKTTDELRDKILAAAIDNSRVILEIDNARLAADDFRLKYENEMALRQSVEADINGLRRVLDELTLTKTDLEMQIESLNEELAYLKKNHEEEMKEFSNQLAGQVNVEMDAAPGVDLTRVLSEMREQYEAMAEKNRRDAEAWFFSKTEELNKEVASNTEMIQTSKSEITDLRRTIQGLEIELQSQLSMKAGLESTLAETDGRYAAQLQQIQGLISSIEAQLSELRSEMEAQNQEYKMLLDIKTRLEQEIATYHSLLEGQDARMAGIGTGEASLGGGGGGKVRINVEESVDGKVVSSRKREI</sequence>
<comment type="subunit">
    <text evidence="1 8">Heterotetramer of two type I and two type II keratins. Interacts with NOD2 (By similarity).</text>
</comment>
<comment type="tissue specificity">
    <text evidence="7">Expressed in the basal cell layers of several stratified epithelia including esophagus, tongue, stomach, epidermis and hair follicle. In the hair follicle, expression is detected mainly in the basal layer of the outer root sheath (ORS), except just above the follicle bulb where it occurs throughout its thickness. Low expression levels are seen in the single layer of ORS cells around the base of the follicle which increases in the palisade-like cells of the bulb. Also expressed in the basal cells of the sebaceous glands, and expression in the epidermis occurs in a punctate pattern.</text>
</comment>
<comment type="miscellaneous">
    <text>There are two types of cytoskeletal and microfibrillar keratin: I (acidic; 40-55 kDa) and II (neutral to basic; 56-70 kDa).</text>
</comment>
<comment type="similarity">
    <text evidence="6">Belongs to the intermediate filament family.</text>
</comment>
<gene>
    <name evidence="9" type="primary">KRT15</name>
</gene>
<protein>
    <recommendedName>
        <fullName>Keratin, type I cytoskeletal 15</fullName>
    </recommendedName>
    <alternativeName>
        <fullName>Cytokeratin-15</fullName>
        <shortName>CK-15</shortName>
    </alternativeName>
    <alternativeName>
        <fullName>Keratin-15</fullName>
        <shortName>K15</shortName>
    </alternativeName>
</protein>
<reference evidence="8 9" key="1">
    <citation type="journal article" date="1998" name="Exp. Cell Res.">
        <title>Expression of the intermediate filament keratin gene, K15, in the basal cell layers of epithelia and the hair follicle.</title>
        <authorList>
            <person name="Whitbread L.A."/>
            <person name="Powell B.C."/>
        </authorList>
    </citation>
    <scope>NUCLEOTIDE SEQUENCE [GENOMIC DNA]</scope>
    <scope>TISSUE SPECIFICITY</scope>
    <source>
        <tissue evidence="9">Spleen</tissue>
    </source>
</reference>
<keyword id="KW-0175">Coiled coil</keyword>
<keyword id="KW-0403">Intermediate filament</keyword>
<keyword id="KW-1017">Isopeptide bond</keyword>
<keyword id="KW-0416">Keratin</keyword>
<keyword id="KW-0597">Phosphoprotein</keyword>
<keyword id="KW-1185">Reference proteome</keyword>
<keyword id="KW-0832">Ubl conjugation</keyword>
<proteinExistence type="evidence at transcript level"/>
<name>K1C15_SHEEP</name>
<feature type="chain" id="PRO_0000063660" description="Keratin, type I cytoskeletal 15">
    <location>
        <begin position="1"/>
        <end position="453"/>
    </location>
</feature>
<feature type="domain" description="IF rod" evidence="6">
    <location>
        <begin position="103"/>
        <end position="415"/>
    </location>
</feature>
<feature type="region of interest" description="Head" evidence="5">
    <location>
        <begin position="1"/>
        <end position="102"/>
    </location>
</feature>
<feature type="region of interest" description="Coil 1A" evidence="5">
    <location>
        <begin position="103"/>
        <end position="138"/>
    </location>
</feature>
<feature type="region of interest" description="Linker 1" evidence="5">
    <location>
        <begin position="139"/>
        <end position="157"/>
    </location>
</feature>
<feature type="region of interest" description="Coil 1B" evidence="5">
    <location>
        <begin position="158"/>
        <end position="249"/>
    </location>
</feature>
<feature type="region of interest" description="Linker 12" evidence="5">
    <location>
        <begin position="250"/>
        <end position="269"/>
    </location>
</feature>
<feature type="region of interest" description="Coil 2" evidence="5">
    <location>
        <begin position="270"/>
        <end position="411"/>
    </location>
</feature>
<feature type="region of interest" description="Tail" evidence="5">
    <location>
        <begin position="412"/>
        <end position="453"/>
    </location>
</feature>
<feature type="modified residue" description="Phosphoserine" evidence="2">
    <location>
        <position position="16"/>
    </location>
</feature>
<feature type="modified residue" description="Phosphoserine" evidence="2">
    <location>
        <position position="17"/>
    </location>
</feature>
<feature type="modified residue" description="Phosphoserine" evidence="3">
    <location>
        <position position="34"/>
    </location>
</feature>
<feature type="modified residue" description="Phosphoserine" evidence="2">
    <location>
        <position position="48"/>
    </location>
</feature>
<feature type="modified residue" description="Phosphoserine" evidence="2">
    <location>
        <position position="56"/>
    </location>
</feature>
<feature type="modified residue" description="Phosphothreonine" evidence="4">
    <location>
        <position position="299"/>
    </location>
</feature>
<feature type="modified residue" description="Phosphothreonine" evidence="4">
    <location>
        <position position="321"/>
    </location>
</feature>
<feature type="cross-link" description="Glycyl lysine isopeptide (Lys-Gly) (interchain with G-Cter in SUMO2)" evidence="2">
    <location>
        <position position="298"/>
    </location>
</feature>
<feature type="cross-link" description="Glycyl lysine isopeptide (Lys-Gly) (interchain with G-Cter in SUMO1); alternate" evidence="2">
    <location>
        <position position="444"/>
    </location>
</feature>
<feature type="cross-link" description="Glycyl lysine isopeptide (Lys-Gly) (interchain with G-Cter in SUMO2); alternate" evidence="2">
    <location>
        <position position="444"/>
    </location>
</feature>
<accession>O77727</accession>